<proteinExistence type="inferred from homology"/>
<gene>
    <name evidence="1" type="primary">caiT</name>
    <name type="ordered locus">Ecok1_00360</name>
    <name type="ORF">APECO1_1941</name>
</gene>
<feature type="chain" id="PRO_1000064330" description="L-carnitine/gamma-butyrobetaine antiporter">
    <location>
        <begin position="1"/>
        <end position="504"/>
    </location>
</feature>
<feature type="transmembrane region" description="Helical" evidence="1">
    <location>
        <begin position="10"/>
        <end position="30"/>
    </location>
</feature>
<feature type="transmembrane region" description="Helical" evidence="1">
    <location>
        <begin position="51"/>
        <end position="71"/>
    </location>
</feature>
<feature type="transmembrane region" description="Helical" evidence="1">
    <location>
        <begin position="92"/>
        <end position="112"/>
    </location>
</feature>
<feature type="transmembrane region" description="Helical" evidence="1">
    <location>
        <begin position="143"/>
        <end position="163"/>
    </location>
</feature>
<feature type="transmembrane region" description="Helical" evidence="1">
    <location>
        <begin position="195"/>
        <end position="215"/>
    </location>
</feature>
<feature type="transmembrane region" description="Helical" evidence="1">
    <location>
        <begin position="231"/>
        <end position="251"/>
    </location>
</feature>
<feature type="transmembrane region" description="Helical" evidence="1">
    <location>
        <begin position="263"/>
        <end position="283"/>
    </location>
</feature>
<feature type="transmembrane region" description="Helical" evidence="1">
    <location>
        <begin position="316"/>
        <end position="336"/>
    </location>
</feature>
<feature type="transmembrane region" description="Helical" evidence="1">
    <location>
        <begin position="347"/>
        <end position="367"/>
    </location>
</feature>
<feature type="transmembrane region" description="Helical" evidence="1">
    <location>
        <begin position="398"/>
        <end position="418"/>
    </location>
</feature>
<feature type="transmembrane region" description="Helical" evidence="1">
    <location>
        <begin position="446"/>
        <end position="466"/>
    </location>
</feature>
<feature type="transmembrane region" description="Helical" evidence="1">
    <location>
        <begin position="475"/>
        <end position="495"/>
    </location>
</feature>
<comment type="function">
    <text evidence="1">Catalyzes the exchange of L-carnitine for gamma-butyrobetaine.</text>
</comment>
<comment type="catalytic activity">
    <reaction evidence="1">
        <text>4-(trimethylamino)butanoate(in) + (R)-carnitine(out) = 4-(trimethylamino)butanoate(out) + (R)-carnitine(in)</text>
        <dbReference type="Rhea" id="RHEA:29427"/>
        <dbReference type="ChEBI" id="CHEBI:16244"/>
        <dbReference type="ChEBI" id="CHEBI:16347"/>
    </reaction>
</comment>
<comment type="pathway">
    <text evidence="1">Amine and polyamine metabolism; carnitine metabolism.</text>
</comment>
<comment type="subunit">
    <text evidence="1">Homotrimer.</text>
</comment>
<comment type="subcellular location">
    <subcellularLocation>
        <location evidence="1">Cell inner membrane</location>
        <topology evidence="1">Multi-pass membrane protein</topology>
    </subcellularLocation>
</comment>
<comment type="similarity">
    <text evidence="1">Belongs to the BCCT transporter (TC 2.A.15) family. CaiT subfamily.</text>
</comment>
<name>CAIT_ECOK1</name>
<evidence type="ECO:0000255" key="1">
    <source>
        <dbReference type="HAMAP-Rule" id="MF_01049"/>
    </source>
</evidence>
<reference key="1">
    <citation type="journal article" date="2007" name="J. Bacteriol.">
        <title>The genome sequence of avian pathogenic Escherichia coli strain O1:K1:H7 shares strong similarities with human extraintestinal pathogenic E. coli genomes.</title>
        <authorList>
            <person name="Johnson T.J."/>
            <person name="Kariyawasam S."/>
            <person name="Wannemuehler Y."/>
            <person name="Mangiamele P."/>
            <person name="Johnson S.J."/>
            <person name="Doetkott C."/>
            <person name="Skyberg J.A."/>
            <person name="Lynne A.M."/>
            <person name="Johnson J.R."/>
            <person name="Nolan L.K."/>
        </authorList>
    </citation>
    <scope>NUCLEOTIDE SEQUENCE [LARGE SCALE GENOMIC DNA]</scope>
</reference>
<organism>
    <name type="scientific">Escherichia coli O1:K1 / APEC</name>
    <dbReference type="NCBI Taxonomy" id="405955"/>
    <lineage>
        <taxon>Bacteria</taxon>
        <taxon>Pseudomonadati</taxon>
        <taxon>Pseudomonadota</taxon>
        <taxon>Gammaproteobacteria</taxon>
        <taxon>Enterobacterales</taxon>
        <taxon>Enterobacteriaceae</taxon>
        <taxon>Escherichia</taxon>
    </lineage>
</organism>
<dbReference type="EMBL" id="CP000468">
    <property type="protein sequence ID" value="ABI99529.1"/>
    <property type="molecule type" value="Genomic_DNA"/>
</dbReference>
<dbReference type="RefSeq" id="WP_000787103.1">
    <property type="nucleotide sequence ID" value="NZ_CADILS010000013.1"/>
</dbReference>
<dbReference type="SMR" id="A1A790"/>
<dbReference type="GeneID" id="93777395"/>
<dbReference type="KEGG" id="ecv:APECO1_1941"/>
<dbReference type="HOGENOM" id="CLU_010118_6_0_6"/>
<dbReference type="UniPathway" id="UPA00117"/>
<dbReference type="Proteomes" id="UP000008216">
    <property type="component" value="Chromosome"/>
</dbReference>
<dbReference type="GO" id="GO:0005886">
    <property type="term" value="C:plasma membrane"/>
    <property type="evidence" value="ECO:0007669"/>
    <property type="project" value="UniProtKB-SubCell"/>
</dbReference>
<dbReference type="GO" id="GO:0044667">
    <property type="term" value="F:(R)-carnitine:4-(trimethylammonio)butanoate antiporter activity"/>
    <property type="evidence" value="ECO:0007669"/>
    <property type="project" value="UniProtKB-UniRule"/>
</dbReference>
<dbReference type="GO" id="GO:1900751">
    <property type="term" value="P:4-(trimethylammonio)butanoate transport"/>
    <property type="evidence" value="ECO:0007669"/>
    <property type="project" value="InterPro"/>
</dbReference>
<dbReference type="GO" id="GO:0009437">
    <property type="term" value="P:carnitine metabolic process"/>
    <property type="evidence" value="ECO:0007669"/>
    <property type="project" value="UniProtKB-UniRule"/>
</dbReference>
<dbReference type="HAMAP" id="MF_01049">
    <property type="entry name" value="CaiT"/>
    <property type="match status" value="1"/>
</dbReference>
<dbReference type="InterPro" id="IPR018093">
    <property type="entry name" value="BCCT_CS"/>
</dbReference>
<dbReference type="InterPro" id="IPR000060">
    <property type="entry name" value="BCCT_transptr"/>
</dbReference>
<dbReference type="InterPro" id="IPR023449">
    <property type="entry name" value="BCCT_transptr_CaiT"/>
</dbReference>
<dbReference type="NCBIfam" id="TIGR00842">
    <property type="entry name" value="bcct"/>
    <property type="match status" value="1"/>
</dbReference>
<dbReference type="NCBIfam" id="NF002887">
    <property type="entry name" value="PRK03356.1"/>
    <property type="match status" value="1"/>
</dbReference>
<dbReference type="PANTHER" id="PTHR30047">
    <property type="entry name" value="HIGH-AFFINITY CHOLINE TRANSPORT PROTEIN-RELATED"/>
    <property type="match status" value="1"/>
</dbReference>
<dbReference type="PANTHER" id="PTHR30047:SF11">
    <property type="entry name" value="L-CARNITINE_GAMMA-BUTYROBETAINE ANTIPORTER"/>
    <property type="match status" value="1"/>
</dbReference>
<dbReference type="Pfam" id="PF02028">
    <property type="entry name" value="BCCT"/>
    <property type="match status" value="1"/>
</dbReference>
<dbReference type="PROSITE" id="PS01303">
    <property type="entry name" value="BCCT"/>
    <property type="match status" value="1"/>
</dbReference>
<protein>
    <recommendedName>
        <fullName evidence="1">L-carnitine/gamma-butyrobetaine antiporter</fullName>
    </recommendedName>
</protein>
<keyword id="KW-0050">Antiport</keyword>
<keyword id="KW-0997">Cell inner membrane</keyword>
<keyword id="KW-1003">Cell membrane</keyword>
<keyword id="KW-0472">Membrane</keyword>
<keyword id="KW-1185">Reference proteome</keyword>
<keyword id="KW-0812">Transmembrane</keyword>
<keyword id="KW-1133">Transmembrane helix</keyword>
<keyword id="KW-0813">Transport</keyword>
<sequence length="504" mass="56587">MKNEKRKTGIEPKVFFPPLIIVGILCWLTVRDLDAANVVINAVFSYVTNVWGWAFEWYMVVMLFGWFWLVFGPYAKKRLGNEPPEFSTASWIFMMFASCTSAAVLFWGSIEIYYYISTPPFGLEPNSTGAKELGLAYSLFHWGPLPWATYSFLSVAFAYFFFVRKMEVIRPSSTLVPLVGEKHAKGLFGTIVDNFYLVALIFAMGTSLGLATPLVTECMQWLFGIPHTLQLDAIIITCWIILNAICVACGLQKGVRIASDVRSYLSFLMLGWVFIVSGASFIMNYFTDSVGMLLMYLPRMLFYTDPIAKGGFPQGWTVFYWAWWVIYAIQMSIFLARISRGRTVRELCFGMVLGLTASTWILWTVLGSNTLLLIDKNIINIPNLIEQYGVARAIIETWAALPLSTATMWGFFILCFIATVTLVNACSYTLAMSTCREVRDGEEPPLLVRIGWSILVGIIGIVLLALGGLKPIQTAIIAGGCPLFFVNIMVTLSFIKDAKQNWKD</sequence>
<accession>A1A790</accession>